<organism>
    <name type="scientific">Mytilus edulis</name>
    <name type="common">Blue mussel</name>
    <dbReference type="NCBI Taxonomy" id="6550"/>
    <lineage>
        <taxon>Eukaryota</taxon>
        <taxon>Metazoa</taxon>
        <taxon>Spiralia</taxon>
        <taxon>Lophotrochozoa</taxon>
        <taxon>Mollusca</taxon>
        <taxon>Bivalvia</taxon>
        <taxon>Autobranchia</taxon>
        <taxon>Pteriomorphia</taxon>
        <taxon>Mytilida</taxon>
        <taxon>Mytiloidea</taxon>
        <taxon>Mytilidae</taxon>
        <taxon>Mytilinae</taxon>
        <taxon>Mytilus</taxon>
    </lineage>
</organism>
<evidence type="ECO:0000250" key="1">
    <source>
        <dbReference type="UniProtKB" id="P00396"/>
    </source>
</evidence>
<evidence type="ECO:0000250" key="2">
    <source>
        <dbReference type="UniProtKB" id="P00401"/>
    </source>
</evidence>
<evidence type="ECO:0000255" key="3"/>
<evidence type="ECO:0000305" key="4"/>
<protein>
    <recommendedName>
        <fullName>Cytochrome c oxidase subunit 1</fullName>
        <ecNumber>7.1.1.9</ecNumber>
    </recommendedName>
    <alternativeName>
        <fullName>Cytochrome c oxidase polypeptide I</fullName>
    </alternativeName>
</protein>
<geneLocation type="mitochondrion"/>
<name>COX1_MYTED</name>
<sequence>MMKMLKKEEMGGYGEVESWWRRWLWSTNHKDIGTLYLYSGVWGGLFGASLSLMIRMQLGHPGAVFLKSDWFYNVVVTTHALMMIFFAVMPILIEAFGNWLIPLLVGGKDMIYPRMNNLSYWLSPNALYLLMLSFSTDKGVGAGWTIYPPLSVYPYHSGPSMDVLIVSLHLAGLSSLVGAINFASTNKNMPVLEMKGERAELYVLSISVTAVLLIISIPVLGGGITMILFDRNFNTTFFDPAGGGDPVLFQHLFWFFGHPEVYILILPAFGVMSKVIMHCSGKEAVFGLIGMVYAMIGIGGLGCMVWAHHMFTVGLNVDTRGYFSTATMVIAVPTGVKVFSWLATMAGSKFKMKPAAYWSTGFLFLFTVGGLTGVLLSSASMDVSLHDTYYVVAHFHYVLSMGAVFGVFCGLNHWLPNFVGVCFNKKWSKAHFMAMFFGVNTTFFPQHFLGLSGMPRRYMDYADIYAHWHWVSSYGSAVSFGSLMYFKFLLWEALVSQRGVVFSGGLCGEMDWAGTRDLYPGSKHVYSQLPFVWTNPYNTCITYIYKKSRNQ</sequence>
<comment type="function">
    <text evidence="2">Component of the cytochrome c oxidase, the last enzyme in the mitochondrial electron transport chain which drives oxidative phosphorylation. The respiratory chain contains 3 multisubunit complexes succinate dehydrogenase (complex II, CII), ubiquinol-cytochrome c oxidoreductase (cytochrome b-c1 complex, complex III, CIII) and cytochrome c oxidase (complex IV, CIV), that cooperate to transfer electrons derived from NADH and succinate to molecular oxygen, creating an electrochemical gradient over the inner membrane that drives transmembrane transport and the ATP synthase. Cytochrome c oxidase is the component of the respiratory chain that catalyzes the reduction of oxygen to water. Electrons originating from reduced cytochrome c in the intermembrane space (IMS) are transferred via the dinuclear copper A center (CU(A)) of subunit 2 and heme A of subunit 1 to the active site in subunit 1, a binuclear center (BNC) formed by heme A3 and copper B (CU(B)). The BNC reduces molecular oxygen to 2 water molecules using 4 electrons from cytochrome c in the IMS and 4 protons from the mitochondrial matrix.</text>
</comment>
<comment type="catalytic activity">
    <reaction evidence="2">
        <text>4 Fe(II)-[cytochrome c] + O2 + 8 H(+)(in) = 4 Fe(III)-[cytochrome c] + 2 H2O + 4 H(+)(out)</text>
        <dbReference type="Rhea" id="RHEA:11436"/>
        <dbReference type="Rhea" id="RHEA-COMP:10350"/>
        <dbReference type="Rhea" id="RHEA-COMP:14399"/>
        <dbReference type="ChEBI" id="CHEBI:15377"/>
        <dbReference type="ChEBI" id="CHEBI:15378"/>
        <dbReference type="ChEBI" id="CHEBI:15379"/>
        <dbReference type="ChEBI" id="CHEBI:29033"/>
        <dbReference type="ChEBI" id="CHEBI:29034"/>
        <dbReference type="EC" id="7.1.1.9"/>
    </reaction>
    <physiologicalReaction direction="left-to-right" evidence="2">
        <dbReference type="Rhea" id="RHEA:11437"/>
    </physiologicalReaction>
</comment>
<comment type="cofactor">
    <cofactor evidence="2">
        <name>heme</name>
        <dbReference type="ChEBI" id="CHEBI:30413"/>
    </cofactor>
    <text evidence="2">Binds 2 heme A groups non-covalently per subunit.</text>
</comment>
<comment type="cofactor">
    <cofactor evidence="2">
        <name>Cu cation</name>
        <dbReference type="ChEBI" id="CHEBI:23378"/>
    </cofactor>
    <text evidence="2">Binds a copper B center.</text>
</comment>
<comment type="pathway">
    <text evidence="2">Energy metabolism; oxidative phosphorylation.</text>
</comment>
<comment type="subunit">
    <text evidence="2">Component of the cytochrome c oxidase (complex IV, CIV), a multisubunit enzyme composed of a catalytic core of 3 subunits and several supernumerary subunits. The complex exists as a monomer or a dimer and forms supercomplexes (SCs) in the inner mitochondrial membrane with ubiquinol-cytochrome c oxidoreductase (cytochrome b-c1 complex, complex III, CIII).</text>
</comment>
<comment type="subcellular location">
    <subcellularLocation>
        <location evidence="2">Mitochondrion inner membrane</location>
        <topology evidence="2">Multi-pass membrane protein</topology>
    </subcellularLocation>
</comment>
<comment type="similarity">
    <text evidence="4">Belongs to the heme-copper respiratory oxidase family.</text>
</comment>
<dbReference type="EC" id="7.1.1.9"/>
<dbReference type="EMBL" id="AY484747">
    <property type="protein sequence ID" value="AAT98405.1"/>
    <property type="molecule type" value="Genomic_DNA"/>
</dbReference>
<dbReference type="PIR" id="S28757">
    <property type="entry name" value="S28757"/>
</dbReference>
<dbReference type="RefSeq" id="YP_073343.1">
    <property type="nucleotide sequence ID" value="NC_006161.1"/>
</dbReference>
<dbReference type="SMR" id="P41774"/>
<dbReference type="UniPathway" id="UPA00705"/>
<dbReference type="GO" id="GO:0005743">
    <property type="term" value="C:mitochondrial inner membrane"/>
    <property type="evidence" value="ECO:0007669"/>
    <property type="project" value="UniProtKB-SubCell"/>
</dbReference>
<dbReference type="GO" id="GO:0045277">
    <property type="term" value="C:respiratory chain complex IV"/>
    <property type="evidence" value="ECO:0007669"/>
    <property type="project" value="InterPro"/>
</dbReference>
<dbReference type="GO" id="GO:0004129">
    <property type="term" value="F:cytochrome-c oxidase activity"/>
    <property type="evidence" value="ECO:0007669"/>
    <property type="project" value="UniProtKB-EC"/>
</dbReference>
<dbReference type="GO" id="GO:0020037">
    <property type="term" value="F:heme binding"/>
    <property type="evidence" value="ECO:0007669"/>
    <property type="project" value="InterPro"/>
</dbReference>
<dbReference type="GO" id="GO:0046872">
    <property type="term" value="F:metal ion binding"/>
    <property type="evidence" value="ECO:0007669"/>
    <property type="project" value="UniProtKB-KW"/>
</dbReference>
<dbReference type="GO" id="GO:0015990">
    <property type="term" value="P:electron transport coupled proton transport"/>
    <property type="evidence" value="ECO:0007669"/>
    <property type="project" value="TreeGrafter"/>
</dbReference>
<dbReference type="GO" id="GO:0006123">
    <property type="term" value="P:mitochondrial electron transport, cytochrome c to oxygen"/>
    <property type="evidence" value="ECO:0007669"/>
    <property type="project" value="TreeGrafter"/>
</dbReference>
<dbReference type="CDD" id="cd01663">
    <property type="entry name" value="Cyt_c_Oxidase_I"/>
    <property type="match status" value="1"/>
</dbReference>
<dbReference type="Gene3D" id="1.20.210.10">
    <property type="entry name" value="Cytochrome c oxidase-like, subunit I domain"/>
    <property type="match status" value="1"/>
</dbReference>
<dbReference type="InterPro" id="IPR023616">
    <property type="entry name" value="Cyt_c_oxase-like_su1_dom"/>
</dbReference>
<dbReference type="InterPro" id="IPR036927">
    <property type="entry name" value="Cyt_c_oxase-like_su1_sf"/>
</dbReference>
<dbReference type="InterPro" id="IPR000883">
    <property type="entry name" value="Cyt_C_Oxase_1"/>
</dbReference>
<dbReference type="InterPro" id="IPR023615">
    <property type="entry name" value="Cyt_c_Oxase_su1_BS"/>
</dbReference>
<dbReference type="InterPro" id="IPR033944">
    <property type="entry name" value="Cyt_c_oxase_su1_dom"/>
</dbReference>
<dbReference type="PANTHER" id="PTHR10422">
    <property type="entry name" value="CYTOCHROME C OXIDASE SUBUNIT 1"/>
    <property type="match status" value="1"/>
</dbReference>
<dbReference type="PANTHER" id="PTHR10422:SF18">
    <property type="entry name" value="CYTOCHROME C OXIDASE SUBUNIT 1"/>
    <property type="match status" value="1"/>
</dbReference>
<dbReference type="Pfam" id="PF00115">
    <property type="entry name" value="COX1"/>
    <property type="match status" value="1"/>
</dbReference>
<dbReference type="PRINTS" id="PR01165">
    <property type="entry name" value="CYCOXIDASEI"/>
</dbReference>
<dbReference type="SUPFAM" id="SSF81442">
    <property type="entry name" value="Cytochrome c oxidase subunit I-like"/>
    <property type="match status" value="1"/>
</dbReference>
<dbReference type="PROSITE" id="PS50855">
    <property type="entry name" value="COX1"/>
    <property type="match status" value="1"/>
</dbReference>
<dbReference type="PROSITE" id="PS00077">
    <property type="entry name" value="COX1_CUB"/>
    <property type="match status" value="1"/>
</dbReference>
<keyword id="KW-0106">Calcium</keyword>
<keyword id="KW-0186">Copper</keyword>
<keyword id="KW-0249">Electron transport</keyword>
<keyword id="KW-0349">Heme</keyword>
<keyword id="KW-0408">Iron</keyword>
<keyword id="KW-0460">Magnesium</keyword>
<keyword id="KW-0472">Membrane</keyword>
<keyword id="KW-0479">Metal-binding</keyword>
<keyword id="KW-0496">Mitochondrion</keyword>
<keyword id="KW-0999">Mitochondrion inner membrane</keyword>
<keyword id="KW-0679">Respiratory chain</keyword>
<keyword id="KW-1278">Translocase</keyword>
<keyword id="KW-0812">Transmembrane</keyword>
<keyword id="KW-1133">Transmembrane helix</keyword>
<keyword id="KW-0813">Transport</keyword>
<feature type="chain" id="PRO_0000183364" description="Cytochrome c oxidase subunit 1">
    <location>
        <begin position="1"/>
        <end position="551"/>
    </location>
</feature>
<feature type="transmembrane region" description="Helical" evidence="3">
    <location>
        <begin position="34"/>
        <end position="54"/>
    </location>
</feature>
<feature type="transmembrane region" description="Helical" evidence="3">
    <location>
        <begin position="81"/>
        <end position="101"/>
    </location>
</feature>
<feature type="transmembrane region" description="Helical" evidence="3">
    <location>
        <begin position="126"/>
        <end position="146"/>
    </location>
</feature>
<feature type="transmembrane region" description="Helical" evidence="3">
    <location>
        <begin position="163"/>
        <end position="183"/>
    </location>
</feature>
<feature type="transmembrane region" description="Helical" evidence="3">
    <location>
        <begin position="209"/>
        <end position="229"/>
    </location>
</feature>
<feature type="transmembrane region" description="Helical" evidence="3">
    <location>
        <begin position="252"/>
        <end position="272"/>
    </location>
</feature>
<feature type="transmembrane region" description="Helical" evidence="3">
    <location>
        <begin position="285"/>
        <end position="305"/>
    </location>
</feature>
<feature type="transmembrane region" description="Helical" evidence="3">
    <location>
        <begin position="326"/>
        <end position="346"/>
    </location>
</feature>
<feature type="transmembrane region" description="Helical" evidence="3">
    <location>
        <begin position="356"/>
        <end position="376"/>
    </location>
</feature>
<feature type="transmembrane region" description="Helical" evidence="3">
    <location>
        <begin position="391"/>
        <end position="411"/>
    </location>
</feature>
<feature type="transmembrane region" description="Helical" evidence="3">
    <location>
        <begin position="432"/>
        <end position="452"/>
    </location>
</feature>
<feature type="transmembrane region" description="Helical" evidence="3">
    <location>
        <begin position="475"/>
        <end position="495"/>
    </location>
</feature>
<feature type="binding site" evidence="2">
    <location>
        <position position="62"/>
    </location>
    <ligand>
        <name>Ca(2+)</name>
        <dbReference type="ChEBI" id="CHEBI:29108"/>
    </ligand>
</feature>
<feature type="binding site" description="axial binding residue" evidence="2">
    <location>
        <position position="79"/>
    </location>
    <ligand>
        <name>Fe(II)-heme a</name>
        <dbReference type="ChEBI" id="CHEBI:61715"/>
        <note>low-spin</note>
    </ligand>
    <ligandPart>
        <name>Fe</name>
        <dbReference type="ChEBI" id="CHEBI:18248"/>
    </ligandPart>
</feature>
<feature type="binding site" evidence="2">
    <location>
        <position position="258"/>
    </location>
    <ligand>
        <name>Cu cation</name>
        <dbReference type="ChEBI" id="CHEBI:23378"/>
        <label>B</label>
    </ligand>
</feature>
<feature type="binding site" evidence="1">
    <location>
        <position position="262"/>
    </location>
    <ligand>
        <name>O2</name>
        <dbReference type="ChEBI" id="CHEBI:15379"/>
    </ligand>
</feature>
<feature type="binding site" evidence="2">
    <location>
        <position position="308"/>
    </location>
    <ligand>
        <name>Cu cation</name>
        <dbReference type="ChEBI" id="CHEBI:23378"/>
        <label>B</label>
    </ligand>
</feature>
<feature type="binding site" evidence="2">
    <location>
        <position position="309"/>
    </location>
    <ligand>
        <name>Cu cation</name>
        <dbReference type="ChEBI" id="CHEBI:23378"/>
        <label>B</label>
    </ligand>
</feature>
<feature type="binding site" evidence="2">
    <location>
        <position position="386"/>
    </location>
    <ligand>
        <name>Mg(2+)</name>
        <dbReference type="ChEBI" id="CHEBI:18420"/>
        <note>ligand shared with subunit 2</note>
    </ligand>
</feature>
<feature type="binding site" evidence="2">
    <location>
        <position position="387"/>
    </location>
    <ligand>
        <name>Mg(2+)</name>
        <dbReference type="ChEBI" id="CHEBI:18420"/>
        <note>ligand shared with subunit 2</note>
    </ligand>
</feature>
<feature type="binding site" description="axial binding residue" evidence="2">
    <location>
        <position position="394"/>
    </location>
    <ligand>
        <name>heme a3</name>
        <dbReference type="ChEBI" id="CHEBI:83282"/>
        <note>high-spin</note>
    </ligand>
    <ligandPart>
        <name>Fe</name>
        <dbReference type="ChEBI" id="CHEBI:18248"/>
    </ligandPart>
</feature>
<feature type="binding site" description="axial binding residue" evidence="2">
    <location>
        <position position="396"/>
    </location>
    <ligand>
        <name>Fe(II)-heme a</name>
        <dbReference type="ChEBI" id="CHEBI:61715"/>
        <note>low-spin</note>
    </ligand>
    <ligandPart>
        <name>Fe</name>
        <dbReference type="ChEBI" id="CHEBI:18248"/>
    </ligandPart>
</feature>
<feature type="cross-link" description="1'-histidyl-3'-tyrosine (His-Tyr)" evidence="2">
    <location>
        <begin position="258"/>
        <end position="262"/>
    </location>
</feature>
<gene>
    <name type="primary">COI</name>
</gene>
<reference key="1">
    <citation type="journal article" date="2004" name="Mol. Biol. Evol.">
        <title>Complete sequences of the highly rearranged molluscan mitochondrial genomes of the scaphopod Graptacme eborea and the bivalve Mytilus edulis.</title>
        <authorList>
            <person name="Boore J.L."/>
            <person name="Medina M."/>
            <person name="Rosenberg L.A."/>
        </authorList>
    </citation>
    <scope>NUCLEOTIDE SEQUENCE [GENOMIC DNA]</scope>
</reference>
<reference key="2">
    <citation type="journal article" date="1992" name="Genetics">
        <title>A novel mitochondrial genome organization for the blue mussel, Mytilus edulis.</title>
        <authorList>
            <person name="Hoffmann R.J."/>
            <person name="Boore J.L."/>
            <person name="Brown W.M."/>
        </authorList>
    </citation>
    <scope>NUCLEOTIDE SEQUENCE [GENOMIC DNA] OF 1-39</scope>
</reference>
<proteinExistence type="inferred from homology"/>
<accession>P41774</accession>
<accession>Q68SR1</accession>